<accession>O15123</accession>
<accession>A0AV38</accession>
<accession>A8K205</accession>
<accession>B7ZLM7</accession>
<accession>Q9NRR7</accession>
<accession>Q9P2Y7</accession>
<sequence>MWQIVFFTLSCDLVLAAAYNNFRKSMDSIGKKQYQVQHGSCSYTFLLPEMDNCRSSSSPYVSNAVQRDAPLEYDDSVQRLQVLENIMENNTQWLMKLENYIQDNMKKEMVEIQQNAVQNQTAVMIEIGTNLLNQTAEQTRKLTDVEAQVLNQTTRLELQLLEHSLSTNKLEKQILDQTSEINKLQDKNSFLEKKVLAMEDKHIIQLQSIKEEKDQLQVLVSKQNSIIEELEKKIVTATVNNSVLQKQQHDLMETVNNLLTMMSTSNSAKDPTVAKEEQISFRDCAEVFKSGHTTNGIYTLTFPNSTEEIKAYCDMEAGGGGWTIIQRREDGSVDFQRTWKEYKVGFGNPSGEYWLGNEFVSQLTNQQRYVLKIHLKDWEGNEAYSLYEHFYLSSEELNYRIHLKGLTGTAGKISSISQPGNDFSTKDGDNDKCICKCSQMLTGGWWFDACGPSNLNGMYYPQRQNTNKFNGIKWYYWKGSGYSLKATTMMIRPADF</sequence>
<keyword id="KW-0002">3D-structure</keyword>
<keyword id="KW-0025">Alternative splicing</keyword>
<keyword id="KW-0037">Angiogenesis</keyword>
<keyword id="KW-0106">Calcium</keyword>
<keyword id="KW-0175">Coiled coil</keyword>
<keyword id="KW-0217">Developmental protein</keyword>
<keyword id="KW-0221">Differentiation</keyword>
<keyword id="KW-0225">Disease variant</keyword>
<keyword id="KW-1015">Disulfide bond</keyword>
<keyword id="KW-0325">Glycoprotein</keyword>
<keyword id="KW-0479">Metal-binding</keyword>
<keyword id="KW-1267">Proteomics identification</keyword>
<keyword id="KW-1185">Reference proteome</keyword>
<keyword id="KW-0964">Secreted</keyword>
<keyword id="KW-0732">Signal</keyword>
<protein>
    <recommendedName>
        <fullName>Angiopoietin-2</fullName>
        <shortName>ANG-2</shortName>
    </recommendedName>
</protein>
<evidence type="ECO:0000250" key="1">
    <source>
        <dbReference type="UniProtKB" id="O35608"/>
    </source>
</evidence>
<evidence type="ECO:0000255" key="2"/>
<evidence type="ECO:0000255" key="3">
    <source>
        <dbReference type="PROSITE-ProRule" id="PRU00739"/>
    </source>
</evidence>
<evidence type="ECO:0000269" key="4">
    <source>
    </source>
</evidence>
<evidence type="ECO:0000269" key="5">
    <source>
    </source>
</evidence>
<evidence type="ECO:0000269" key="6">
    <source>
    </source>
</evidence>
<evidence type="ECO:0000269" key="7">
    <source>
    </source>
</evidence>
<evidence type="ECO:0000269" key="8">
    <source>
    </source>
</evidence>
<evidence type="ECO:0000269" key="9">
    <source>
    </source>
</evidence>
<evidence type="ECO:0000269" key="10">
    <source>
    </source>
</evidence>
<evidence type="ECO:0000269" key="11">
    <source>
    </source>
</evidence>
<evidence type="ECO:0000303" key="12">
    <source>
    </source>
</evidence>
<evidence type="ECO:0000303" key="13">
    <source>
    </source>
</evidence>
<evidence type="ECO:0000303" key="14">
    <source>
    </source>
</evidence>
<evidence type="ECO:0007744" key="15">
    <source>
        <dbReference type="PDB" id="1Z3U"/>
    </source>
</evidence>
<evidence type="ECO:0007829" key="16">
    <source>
        <dbReference type="PDB" id="1Z3U"/>
    </source>
</evidence>
<evidence type="ECO:0007829" key="17">
    <source>
        <dbReference type="PDB" id="4JZC"/>
    </source>
</evidence>
<evidence type="ECO:0007829" key="18">
    <source>
        <dbReference type="PDB" id="4ZFG"/>
    </source>
</evidence>
<evidence type="ECO:0007829" key="19">
    <source>
        <dbReference type="PDB" id="8VGP"/>
    </source>
</evidence>
<proteinExistence type="evidence at protein level"/>
<reference key="1">
    <citation type="journal article" date="1997" name="Science">
        <title>Angiopoietin-2, a natural antagonist for Tie2 that disrupts in vivo angiogenesis.</title>
        <authorList>
            <person name="Maisonpierre P.C."/>
            <person name="Suri C."/>
            <person name="Jones P.F."/>
            <person name="Bartunkova S."/>
            <person name="Wiegand S.J."/>
            <person name="Radziejewski C."/>
            <person name="Compton D.L."/>
            <person name="McClain J."/>
            <person name="Aldrich T.H."/>
            <person name="Papadopoulos N."/>
            <person name="Daly T.J."/>
            <person name="Davis S."/>
            <person name="Sato T.N."/>
            <person name="Yancopoulos G.D."/>
        </authorList>
    </citation>
    <scope>NUCLEOTIDE SEQUENCE [MRNA] (ISOFORM 1)</scope>
    <scope>INTERACTION WITH TEK/TIE2</scope>
    <scope>FUNCTION</scope>
    <source>
        <tissue>Lung</tissue>
    </source>
</reference>
<reference key="2">
    <citation type="journal article" date="1999" name="J. Clin. Invest.">
        <title>Biologic significance of angiopoietin-2 expression in human hepatocellular carcinoma.</title>
        <authorList>
            <person name="Tanaka S."/>
            <person name="Mori M."/>
            <person name="Sakamoto Y."/>
            <person name="Makuuchi M."/>
            <person name="Sugimachi K."/>
            <person name="Wands J.R."/>
        </authorList>
    </citation>
    <scope>NUCLEOTIDE SEQUENCE [MRNA] (ISOFORM 2)</scope>
</reference>
<reference key="3">
    <citation type="journal article" date="2000" name="J. Biol. Chem.">
        <title>Characterization and expression of a novel alternatively spliced human angiopoietin-2.</title>
        <authorList>
            <person name="Kim I."/>
            <person name="Kim J.-H."/>
            <person name="Ryu Y.S."/>
            <person name="Jung S.H."/>
            <person name="Nah J.J."/>
            <person name="Koh G.Y."/>
        </authorList>
    </citation>
    <scope>NUCLEOTIDE SEQUENCE [MRNA] (ISOFORM 3)</scope>
    <source>
        <tissue>Umbilical vein endothelial cell</tissue>
    </source>
</reference>
<reference key="4">
    <citation type="journal article" date="2004" name="Nat. Genet.">
        <title>Complete sequencing and characterization of 21,243 full-length human cDNAs.</title>
        <authorList>
            <person name="Ota T."/>
            <person name="Suzuki Y."/>
            <person name="Nishikawa T."/>
            <person name="Otsuki T."/>
            <person name="Sugiyama T."/>
            <person name="Irie R."/>
            <person name="Wakamatsu A."/>
            <person name="Hayashi K."/>
            <person name="Sato H."/>
            <person name="Nagai K."/>
            <person name="Kimura K."/>
            <person name="Makita H."/>
            <person name="Sekine M."/>
            <person name="Obayashi M."/>
            <person name="Nishi T."/>
            <person name="Shibahara T."/>
            <person name="Tanaka T."/>
            <person name="Ishii S."/>
            <person name="Yamamoto J."/>
            <person name="Saito K."/>
            <person name="Kawai Y."/>
            <person name="Isono Y."/>
            <person name="Nakamura Y."/>
            <person name="Nagahari K."/>
            <person name="Murakami K."/>
            <person name="Yasuda T."/>
            <person name="Iwayanagi T."/>
            <person name="Wagatsuma M."/>
            <person name="Shiratori A."/>
            <person name="Sudo H."/>
            <person name="Hosoiri T."/>
            <person name="Kaku Y."/>
            <person name="Kodaira H."/>
            <person name="Kondo H."/>
            <person name="Sugawara M."/>
            <person name="Takahashi M."/>
            <person name="Kanda K."/>
            <person name="Yokoi T."/>
            <person name="Furuya T."/>
            <person name="Kikkawa E."/>
            <person name="Omura Y."/>
            <person name="Abe K."/>
            <person name="Kamihara K."/>
            <person name="Katsuta N."/>
            <person name="Sato K."/>
            <person name="Tanikawa M."/>
            <person name="Yamazaki M."/>
            <person name="Ninomiya K."/>
            <person name="Ishibashi T."/>
            <person name="Yamashita H."/>
            <person name="Murakawa K."/>
            <person name="Fujimori K."/>
            <person name="Tanai H."/>
            <person name="Kimata M."/>
            <person name="Watanabe M."/>
            <person name="Hiraoka S."/>
            <person name="Chiba Y."/>
            <person name="Ishida S."/>
            <person name="Ono Y."/>
            <person name="Takiguchi S."/>
            <person name="Watanabe S."/>
            <person name="Yosida M."/>
            <person name="Hotuta T."/>
            <person name="Kusano J."/>
            <person name="Kanehori K."/>
            <person name="Takahashi-Fujii A."/>
            <person name="Hara H."/>
            <person name="Tanase T.-O."/>
            <person name="Nomura Y."/>
            <person name="Togiya S."/>
            <person name="Komai F."/>
            <person name="Hara R."/>
            <person name="Takeuchi K."/>
            <person name="Arita M."/>
            <person name="Imose N."/>
            <person name="Musashino K."/>
            <person name="Yuuki H."/>
            <person name="Oshima A."/>
            <person name="Sasaki N."/>
            <person name="Aotsuka S."/>
            <person name="Yoshikawa Y."/>
            <person name="Matsunawa H."/>
            <person name="Ichihara T."/>
            <person name="Shiohata N."/>
            <person name="Sano S."/>
            <person name="Moriya S."/>
            <person name="Momiyama H."/>
            <person name="Satoh N."/>
            <person name="Takami S."/>
            <person name="Terashima Y."/>
            <person name="Suzuki O."/>
            <person name="Nakagawa S."/>
            <person name="Senoh A."/>
            <person name="Mizoguchi H."/>
            <person name="Goto Y."/>
            <person name="Shimizu F."/>
            <person name="Wakebe H."/>
            <person name="Hishigaki H."/>
            <person name="Watanabe T."/>
            <person name="Sugiyama A."/>
            <person name="Takemoto M."/>
            <person name="Kawakami B."/>
            <person name="Yamazaki M."/>
            <person name="Watanabe K."/>
            <person name="Kumagai A."/>
            <person name="Itakura S."/>
            <person name="Fukuzumi Y."/>
            <person name="Fujimori Y."/>
            <person name="Komiyama M."/>
            <person name="Tashiro H."/>
            <person name="Tanigami A."/>
            <person name="Fujiwara T."/>
            <person name="Ono T."/>
            <person name="Yamada K."/>
            <person name="Fujii Y."/>
            <person name="Ozaki K."/>
            <person name="Hirao M."/>
            <person name="Ohmori Y."/>
            <person name="Kawabata A."/>
            <person name="Hikiji T."/>
            <person name="Kobatake N."/>
            <person name="Inagaki H."/>
            <person name="Ikema Y."/>
            <person name="Okamoto S."/>
            <person name="Okitani R."/>
            <person name="Kawakami T."/>
            <person name="Noguchi S."/>
            <person name="Itoh T."/>
            <person name="Shigeta K."/>
            <person name="Senba T."/>
            <person name="Matsumura K."/>
            <person name="Nakajima Y."/>
            <person name="Mizuno T."/>
            <person name="Morinaga M."/>
            <person name="Sasaki M."/>
            <person name="Togashi T."/>
            <person name="Oyama M."/>
            <person name="Hata H."/>
            <person name="Watanabe M."/>
            <person name="Komatsu T."/>
            <person name="Mizushima-Sugano J."/>
            <person name="Satoh T."/>
            <person name="Shirai Y."/>
            <person name="Takahashi Y."/>
            <person name="Nakagawa K."/>
            <person name="Okumura K."/>
            <person name="Nagase T."/>
            <person name="Nomura N."/>
            <person name="Kikuchi H."/>
            <person name="Masuho Y."/>
            <person name="Yamashita R."/>
            <person name="Nakai K."/>
            <person name="Yada T."/>
            <person name="Nakamura Y."/>
            <person name="Ohara O."/>
            <person name="Isogai T."/>
            <person name="Sugano S."/>
        </authorList>
    </citation>
    <scope>NUCLEOTIDE SEQUENCE [LARGE SCALE MRNA] (ISOFORM 1)</scope>
    <source>
        <tissue>Substantia nigra</tissue>
    </source>
</reference>
<reference key="5">
    <citation type="journal article" date="2006" name="Nature">
        <title>DNA sequence and analysis of human chromosome 8.</title>
        <authorList>
            <person name="Nusbaum C."/>
            <person name="Mikkelsen T.S."/>
            <person name="Zody M.C."/>
            <person name="Asakawa S."/>
            <person name="Taudien S."/>
            <person name="Garber M."/>
            <person name="Kodira C.D."/>
            <person name="Schueler M.G."/>
            <person name="Shimizu A."/>
            <person name="Whittaker C.A."/>
            <person name="Chang J.L."/>
            <person name="Cuomo C.A."/>
            <person name="Dewar K."/>
            <person name="FitzGerald M.G."/>
            <person name="Yang X."/>
            <person name="Allen N.R."/>
            <person name="Anderson S."/>
            <person name="Asakawa T."/>
            <person name="Blechschmidt K."/>
            <person name="Bloom T."/>
            <person name="Borowsky M.L."/>
            <person name="Butler J."/>
            <person name="Cook A."/>
            <person name="Corum B."/>
            <person name="DeArellano K."/>
            <person name="DeCaprio D."/>
            <person name="Dooley K.T."/>
            <person name="Dorris L. III"/>
            <person name="Engels R."/>
            <person name="Gloeckner G."/>
            <person name="Hafez N."/>
            <person name="Hagopian D.S."/>
            <person name="Hall J.L."/>
            <person name="Ishikawa S.K."/>
            <person name="Jaffe D.B."/>
            <person name="Kamat A."/>
            <person name="Kudoh J."/>
            <person name="Lehmann R."/>
            <person name="Lokitsang T."/>
            <person name="Macdonald P."/>
            <person name="Major J.E."/>
            <person name="Matthews C.D."/>
            <person name="Mauceli E."/>
            <person name="Menzel U."/>
            <person name="Mihalev A.H."/>
            <person name="Minoshima S."/>
            <person name="Murayama Y."/>
            <person name="Naylor J.W."/>
            <person name="Nicol R."/>
            <person name="Nguyen C."/>
            <person name="O'Leary S.B."/>
            <person name="O'Neill K."/>
            <person name="Parker S.C.J."/>
            <person name="Polley A."/>
            <person name="Raymond C.K."/>
            <person name="Reichwald K."/>
            <person name="Rodriguez J."/>
            <person name="Sasaki T."/>
            <person name="Schilhabel M."/>
            <person name="Siddiqui R."/>
            <person name="Smith C.L."/>
            <person name="Sneddon T.P."/>
            <person name="Talamas J.A."/>
            <person name="Tenzin P."/>
            <person name="Topham K."/>
            <person name="Venkataraman V."/>
            <person name="Wen G."/>
            <person name="Yamazaki S."/>
            <person name="Young S.K."/>
            <person name="Zeng Q."/>
            <person name="Zimmer A.R."/>
            <person name="Rosenthal A."/>
            <person name="Birren B.W."/>
            <person name="Platzer M."/>
            <person name="Shimizu N."/>
            <person name="Lander E.S."/>
        </authorList>
    </citation>
    <scope>NUCLEOTIDE SEQUENCE [LARGE SCALE GENOMIC DNA]</scope>
</reference>
<reference key="6">
    <citation type="submission" date="2005-09" db="EMBL/GenBank/DDBJ databases">
        <authorList>
            <person name="Mural R.J."/>
            <person name="Istrail S."/>
            <person name="Sutton G.G."/>
            <person name="Florea L."/>
            <person name="Halpern A.L."/>
            <person name="Mobarry C.M."/>
            <person name="Lippert R."/>
            <person name="Walenz B."/>
            <person name="Shatkay H."/>
            <person name="Dew I."/>
            <person name="Miller J.R."/>
            <person name="Flanigan M.J."/>
            <person name="Edwards N.J."/>
            <person name="Bolanos R."/>
            <person name="Fasulo D."/>
            <person name="Halldorsson B.V."/>
            <person name="Hannenhalli S."/>
            <person name="Turner R."/>
            <person name="Yooseph S."/>
            <person name="Lu F."/>
            <person name="Nusskern D.R."/>
            <person name="Shue B.C."/>
            <person name="Zheng X.H."/>
            <person name="Zhong F."/>
            <person name="Delcher A.L."/>
            <person name="Huson D.H."/>
            <person name="Kravitz S.A."/>
            <person name="Mouchard L."/>
            <person name="Reinert K."/>
            <person name="Remington K.A."/>
            <person name="Clark A.G."/>
            <person name="Waterman M.S."/>
            <person name="Eichler E.E."/>
            <person name="Adams M.D."/>
            <person name="Hunkapiller M.W."/>
            <person name="Myers E.W."/>
            <person name="Venter J.C."/>
        </authorList>
    </citation>
    <scope>NUCLEOTIDE SEQUENCE [LARGE SCALE GENOMIC DNA]</scope>
</reference>
<reference key="7">
    <citation type="journal article" date="2004" name="Genome Res.">
        <title>The status, quality, and expansion of the NIH full-length cDNA project: the Mammalian Gene Collection (MGC).</title>
        <authorList>
            <consortium name="The MGC Project Team"/>
        </authorList>
    </citation>
    <scope>NUCLEOTIDE SEQUENCE [LARGE SCALE MRNA] (ISOFORMS 1 AND 2)</scope>
    <source>
        <tissue>Colon</tissue>
    </source>
</reference>
<reference key="8">
    <citation type="journal article" date="2003" name="J. Biol. Chem.">
        <title>Angiopoietin-1 and angiopoietin-2 share the same binding domains in the Tie-2 receptor involving the first Ig-like loop and the epidermal growth factor-like repeats.</title>
        <authorList>
            <person name="Fiedler U."/>
            <person name="Krissl T."/>
            <person name="Koidl S."/>
            <person name="Weiss C."/>
            <person name="Koblizek T."/>
            <person name="Deutsch U."/>
            <person name="Martiny-Baron G."/>
            <person name="Marme D."/>
            <person name="Augustin H.G."/>
        </authorList>
    </citation>
    <scope>INTERACTION WITH TEK/TIE2</scope>
</reference>
<reference key="9">
    <citation type="journal article" date="2004" name="FASEB J.">
        <title>Biological characterization of angiopoietin-3 and angiopoietin-4.</title>
        <authorList>
            <person name="Lee H.J."/>
            <person name="Cho C.H."/>
            <person name="Hwang S.J."/>
            <person name="Choi H.H."/>
            <person name="Kim K.T."/>
            <person name="Ahn S.Y."/>
            <person name="Kim J.H."/>
            <person name="Oh J.L."/>
            <person name="Lee G.M."/>
            <person name="Koh G.Y."/>
        </authorList>
    </citation>
    <scope>FUNCTION IN REGULATION OF ANGIOGENESIS; CELL SURVIVAL; CELL MIGRATION AND ACTIVATION OF AKT1</scope>
    <scope>INTERACTION WITH TEK/TIE2</scope>
</reference>
<reference key="10">
    <citation type="journal article" date="2009" name="Angiogenesis">
        <title>Tyrosine phosphatase beta regulates angiopoietin-Tie2 signaling in human endothelial cells.</title>
        <authorList>
            <person name="Yacyshyn O.K."/>
            <person name="Lai P.F.H."/>
            <person name="Forse K."/>
            <person name="Teichert-Kuliszewska K."/>
            <person name="Jurasz P."/>
            <person name="Stewart D.J."/>
        </authorList>
    </citation>
    <scope>FUNCTION</scope>
</reference>
<reference key="11">
    <citation type="journal article" date="2009" name="Mol. Cell. Biol.">
        <title>Angiopoietin 2 is a partial agonist/antagonist of Tie2 signaling in the endothelium.</title>
        <authorList>
            <person name="Yuan H.T."/>
            <person name="Khankin E.V."/>
            <person name="Karumanchi S.A."/>
            <person name="Parikh S.M."/>
        </authorList>
    </citation>
    <scope>FUNCTION</scope>
    <scope>INTERACTION WITH TEK/TIE2</scope>
</reference>
<reference key="12">
    <citation type="journal article" date="2009" name="Nat. Rev. Mol. Cell Biol.">
        <title>Control of vascular morphogenesis and homeostasis through the angiopoietin-Tie system.</title>
        <authorList>
            <person name="Augustin H.G."/>
            <person name="Koh G.Y."/>
            <person name="Thurston G."/>
            <person name="Alitalo K."/>
        </authorList>
    </citation>
    <scope>REVIEW</scope>
</reference>
<reference key="13">
    <citation type="journal article" date="2018" name="Sci. Rep.">
        <title>Angiopoietins bind thrombomodulin and inhibit its function as a thrombin cofactor.</title>
        <authorList>
            <person name="Daly C."/>
            <person name="Qian X."/>
            <person name="Castanaro C."/>
            <person name="Pasnikowski E."/>
            <person name="Jiang X."/>
            <person name="Thomson B.R."/>
            <person name="Quaggin S.E."/>
            <person name="Papadopoulos N."/>
            <person name="Wei Y."/>
            <person name="Rudge J.S."/>
            <person name="Thurston G."/>
            <person name="Yancopoulos G.D."/>
            <person name="Davis S."/>
        </authorList>
    </citation>
    <scope>INTERACTION WITH THBD</scope>
</reference>
<reference key="14">
    <citation type="journal article" date="2005" name="Structure">
        <title>Structure of the angiopoietin-2 receptor binding domain and identification of surfaces involved in Tie2 recognition.</title>
        <authorList>
            <person name="Barton W.A."/>
            <person name="Tzvetkova D."/>
            <person name="Nikolov D.B."/>
        </authorList>
    </citation>
    <scope>X-RAY CRYSTALLOGRAPHY (2.25 ANGSTROMS) OF 281-496 IN COMPLEX WITH CALCIUM IONS</scope>
    <scope>DISULFIDE BONDS</scope>
    <scope>CALCIUM-BINDING SITES</scope>
</reference>
<reference key="15">
    <citation type="journal article" date="2006" name="Nat. Struct. Mol. Biol.">
        <title>Crystal structures of the Tie2 receptor ectodomain and the angiopoietin-2-Tie2 complex.</title>
        <authorList>
            <person name="Barton W.A."/>
            <person name="Tzvetkova-Robev D."/>
            <person name="Miranda E.P."/>
            <person name="Kolev M.V."/>
            <person name="Rajashankar K.R."/>
            <person name="Himanen J.P."/>
            <person name="Nikolov D.B."/>
        </authorList>
    </citation>
    <scope>X-RAY CRYSTALLOGRAPHY (3.7 ANGSTROMS) OF 281-495 IN COMPLEX WITH CALCIUM IONS AND TEK</scope>
    <scope>DISULFIDE BONDS</scope>
    <scope>CALCIUM-BINDING SITES</scope>
</reference>
<reference key="16">
    <citation type="journal article" date="2020" name="Sci. Transl. Med.">
        <title>Characterization of ANGPT2 mutations associated with primary lymphedema.</title>
        <authorList>
            <person name="Leppaenen V.M."/>
            <person name="Brouillard P."/>
            <person name="Korhonen E.A."/>
            <person name="Sipilae T."/>
            <person name="Jha S.K."/>
            <person name="Revencu N."/>
            <person name="Labarque V."/>
            <person name="Fastre E."/>
            <person name="Schloegel M."/>
            <person name="Ravoet M."/>
            <person name="Singer A."/>
            <person name="Luzzatto C."/>
            <person name="Angelone D."/>
            <person name="Crichiutti G."/>
            <person name="D'Elia A."/>
            <person name="Kuurne J."/>
            <person name="Elamaa H."/>
            <person name="Koh G.Y."/>
            <person name="Saharinen P."/>
            <person name="Vikkula M."/>
            <person name="Alitalo K."/>
        </authorList>
    </citation>
    <scope>VARIANTS LMPHM10 MET-299; LYS-304; SER-435 AND GLN-492</scope>
    <scope>CHARACTERIZATION OF VARIANTS LMPHM10 MET-299; LYS-304; SER-435 AND GLN-492</scope>
    <scope>INVOLVEMENT IN LMPHM10</scope>
    <scope>FUNCTION</scope>
    <scope>INTERACTION WITH TEK AND ITGA5</scope>
    <scope>SUBCELLULAR LOCATION</scope>
</reference>
<gene>
    <name type="primary">ANGPT2</name>
</gene>
<dbReference type="EMBL" id="AF004327">
    <property type="protein sequence ID" value="AAB63190.1"/>
    <property type="molecule type" value="mRNA"/>
</dbReference>
<dbReference type="EMBL" id="AB009865">
    <property type="protein sequence ID" value="BAA95590.1"/>
    <property type="molecule type" value="mRNA"/>
</dbReference>
<dbReference type="EMBL" id="AF187858">
    <property type="protein sequence ID" value="AAF76526.1"/>
    <property type="molecule type" value="mRNA"/>
</dbReference>
<dbReference type="EMBL" id="AK290070">
    <property type="protein sequence ID" value="BAF82759.1"/>
    <property type="molecule type" value="mRNA"/>
</dbReference>
<dbReference type="EMBL" id="AC018398">
    <property type="status" value="NOT_ANNOTATED_CDS"/>
    <property type="molecule type" value="Genomic_DNA"/>
</dbReference>
<dbReference type="EMBL" id="CH471153">
    <property type="protein sequence ID" value="EAW80474.1"/>
    <property type="molecule type" value="Genomic_DNA"/>
</dbReference>
<dbReference type="EMBL" id="BC126200">
    <property type="protein sequence ID" value="AAI26201.1"/>
    <property type="molecule type" value="mRNA"/>
</dbReference>
<dbReference type="EMBL" id="BC126202">
    <property type="protein sequence ID" value="AAI26203.1"/>
    <property type="molecule type" value="mRNA"/>
</dbReference>
<dbReference type="EMBL" id="BC143902">
    <property type="protein sequence ID" value="AAI43903.1"/>
    <property type="molecule type" value="mRNA"/>
</dbReference>
<dbReference type="CCDS" id="CCDS47761.1">
    <molecule id="O15123-2"/>
</dbReference>
<dbReference type="CCDS" id="CCDS47762.1">
    <molecule id="O15123-3"/>
</dbReference>
<dbReference type="CCDS" id="CCDS5958.1">
    <molecule id="O15123-1"/>
</dbReference>
<dbReference type="RefSeq" id="NP_001112359.1">
    <molecule id="O15123-3"/>
    <property type="nucleotide sequence ID" value="NM_001118887.2"/>
</dbReference>
<dbReference type="RefSeq" id="NP_001112360.1">
    <molecule id="O15123-2"/>
    <property type="nucleotide sequence ID" value="NM_001118888.2"/>
</dbReference>
<dbReference type="RefSeq" id="NP_001138.1">
    <molecule id="O15123-1"/>
    <property type="nucleotide sequence ID" value="NM_001147.3"/>
</dbReference>
<dbReference type="PDB" id="1Z3S">
    <property type="method" value="X-ray"/>
    <property type="resolution" value="2.35 A"/>
    <property type="chains" value="A/B=281-496"/>
</dbReference>
<dbReference type="PDB" id="1Z3U">
    <property type="method" value="X-ray"/>
    <property type="resolution" value="2.25 A"/>
    <property type="chains" value="A/B/C/D=281-496"/>
</dbReference>
<dbReference type="PDB" id="2GY7">
    <property type="method" value="X-ray"/>
    <property type="resolution" value="3.70 A"/>
    <property type="chains" value="A=281-495"/>
</dbReference>
<dbReference type="PDB" id="4JZC">
    <property type="method" value="X-ray"/>
    <property type="resolution" value="1.90 A"/>
    <property type="chains" value="A=279-496"/>
</dbReference>
<dbReference type="PDB" id="4ZFG">
    <property type="method" value="X-ray"/>
    <property type="resolution" value="2.27 A"/>
    <property type="chains" value="A=277-496"/>
</dbReference>
<dbReference type="PDB" id="8VGP">
    <property type="method" value="EM"/>
    <property type="resolution" value="2.70 A"/>
    <property type="chains" value="A=277-496"/>
</dbReference>
<dbReference type="PDBsum" id="1Z3S"/>
<dbReference type="PDBsum" id="1Z3U"/>
<dbReference type="PDBsum" id="2GY7"/>
<dbReference type="PDBsum" id="4JZC"/>
<dbReference type="PDBsum" id="4ZFG"/>
<dbReference type="PDBsum" id="8VGP"/>
<dbReference type="EMDB" id="EMD-43220"/>
<dbReference type="SMR" id="O15123"/>
<dbReference type="BioGRID" id="106782">
    <property type="interactions" value="19"/>
</dbReference>
<dbReference type="CORUM" id="O15123"/>
<dbReference type="DIP" id="DIP-6048N"/>
<dbReference type="FunCoup" id="O15123">
    <property type="interactions" value="860"/>
</dbReference>
<dbReference type="IntAct" id="O15123">
    <property type="interactions" value="10"/>
</dbReference>
<dbReference type="MINT" id="O15123"/>
<dbReference type="STRING" id="9606.ENSP00000314897"/>
<dbReference type="ChEMBL" id="CHEMBL3580489"/>
<dbReference type="DrugBank" id="DB15303">
    <property type="generic name" value="Faricimab"/>
</dbReference>
<dbReference type="DrugBank" id="DB12317">
    <property type="generic name" value="Vanucizumab"/>
</dbReference>
<dbReference type="DrugCentral" id="O15123"/>
<dbReference type="UniLectin" id="O15123"/>
<dbReference type="GlyConnect" id="664">
    <property type="glycosylation" value="2 N-Linked glycans (2 sites)"/>
</dbReference>
<dbReference type="GlyCosmos" id="O15123">
    <property type="glycosylation" value="6 sites, 4 glycans"/>
</dbReference>
<dbReference type="GlyGen" id="O15123">
    <property type="glycosylation" value="7 sites, 21 N-linked glycans (4 sites), 1 O-linked glycan (1 site)"/>
</dbReference>
<dbReference type="iPTMnet" id="O15123"/>
<dbReference type="PhosphoSitePlus" id="O15123"/>
<dbReference type="SwissPalm" id="O15123"/>
<dbReference type="BioMuta" id="ANGPT2"/>
<dbReference type="jPOST" id="O15123"/>
<dbReference type="MassIVE" id="O15123"/>
<dbReference type="PaxDb" id="9606-ENSP00000314897"/>
<dbReference type="PeptideAtlas" id="O15123"/>
<dbReference type="ProteomicsDB" id="48460">
    <molecule id="O15123-1"/>
</dbReference>
<dbReference type="ProteomicsDB" id="48461">
    <molecule id="O15123-2"/>
</dbReference>
<dbReference type="ProteomicsDB" id="48462">
    <molecule id="O15123-3"/>
</dbReference>
<dbReference type="ABCD" id="O15123">
    <property type="antibodies" value="290 sequenced antibodies"/>
</dbReference>
<dbReference type="Antibodypedia" id="4319">
    <property type="antibodies" value="874 antibodies from 42 providers"/>
</dbReference>
<dbReference type="DNASU" id="285"/>
<dbReference type="Ensembl" id="ENST00000325203.9">
    <molecule id="O15123-1"/>
    <property type="protein sequence ID" value="ENSP00000314897.5"/>
    <property type="gene ID" value="ENSG00000091879.14"/>
</dbReference>
<dbReference type="Ensembl" id="ENST00000338312.10">
    <molecule id="O15123-2"/>
    <property type="protein sequence ID" value="ENSP00000343517.6"/>
    <property type="gene ID" value="ENSG00000091879.14"/>
</dbReference>
<dbReference type="Ensembl" id="ENST00000629816.3">
    <molecule id="O15123-3"/>
    <property type="protein sequence ID" value="ENSP00000486858.2"/>
    <property type="gene ID" value="ENSG00000091879.14"/>
</dbReference>
<dbReference type="GeneID" id="285"/>
<dbReference type="KEGG" id="hsa:285"/>
<dbReference type="MANE-Select" id="ENST00000629816.3">
    <molecule id="O15123-3"/>
    <property type="protein sequence ID" value="ENSP00000486858.2"/>
    <property type="RefSeq nucleotide sequence ID" value="NM_001118887.2"/>
    <property type="RefSeq protein sequence ID" value="NP_001112359.1"/>
</dbReference>
<dbReference type="UCSC" id="uc003wqj.6">
    <molecule id="O15123-1"/>
    <property type="organism name" value="human"/>
</dbReference>
<dbReference type="AGR" id="HGNC:485"/>
<dbReference type="CTD" id="285"/>
<dbReference type="DisGeNET" id="285"/>
<dbReference type="GeneCards" id="ANGPT2"/>
<dbReference type="HGNC" id="HGNC:485">
    <property type="gene designation" value="ANGPT2"/>
</dbReference>
<dbReference type="HPA" id="ENSG00000091879">
    <property type="expression patterns" value="Low tissue specificity"/>
</dbReference>
<dbReference type="MalaCards" id="ANGPT2"/>
<dbReference type="MIM" id="601922">
    <property type="type" value="gene"/>
</dbReference>
<dbReference type="MIM" id="619369">
    <property type="type" value="phenotype"/>
</dbReference>
<dbReference type="neXtProt" id="NX_O15123"/>
<dbReference type="OpenTargets" id="ENSG00000091879"/>
<dbReference type="Orphanet" id="363999">
    <property type="disease" value="Non-immune hydrops fetalis"/>
</dbReference>
<dbReference type="PharmGKB" id="PA24792"/>
<dbReference type="VEuPathDB" id="HostDB:ENSG00000091879"/>
<dbReference type="eggNOG" id="KOG2579">
    <property type="taxonomic scope" value="Eukaryota"/>
</dbReference>
<dbReference type="GeneTree" id="ENSGT00940000158430"/>
<dbReference type="InParanoid" id="O15123"/>
<dbReference type="OMA" id="YYWKGAG"/>
<dbReference type="OrthoDB" id="7735366at2759"/>
<dbReference type="PAN-GO" id="O15123">
    <property type="GO annotations" value="5 GO annotations based on evolutionary models"/>
</dbReference>
<dbReference type="PhylomeDB" id="O15123"/>
<dbReference type="TreeFam" id="TF336658"/>
<dbReference type="PathwayCommons" id="O15123"/>
<dbReference type="Reactome" id="R-HSA-210993">
    <property type="pathway name" value="Tie2 Signaling"/>
</dbReference>
<dbReference type="SignaLink" id="O15123"/>
<dbReference type="SIGNOR" id="O15123"/>
<dbReference type="BioGRID-ORCS" id="285">
    <property type="hits" value="13 hits in 1154 CRISPR screens"/>
</dbReference>
<dbReference type="ChiTaRS" id="ANGPT2">
    <property type="organism name" value="human"/>
</dbReference>
<dbReference type="EvolutionaryTrace" id="O15123"/>
<dbReference type="GeneWiki" id="ANGPT2"/>
<dbReference type="GenomeRNAi" id="285"/>
<dbReference type="Pharos" id="O15123">
    <property type="development level" value="Tclin"/>
</dbReference>
<dbReference type="PRO" id="PR:O15123"/>
<dbReference type="Proteomes" id="UP000005640">
    <property type="component" value="Chromosome 8"/>
</dbReference>
<dbReference type="RNAct" id="O15123">
    <property type="molecule type" value="protein"/>
</dbReference>
<dbReference type="Bgee" id="ENSG00000091879">
    <property type="expression patterns" value="Expressed in tendon of biceps brachii and 153 other cell types or tissues"/>
</dbReference>
<dbReference type="ExpressionAtlas" id="O15123">
    <property type="expression patterns" value="baseline and differential"/>
</dbReference>
<dbReference type="GO" id="GO:0042995">
    <property type="term" value="C:cell projection"/>
    <property type="evidence" value="ECO:0007669"/>
    <property type="project" value="Ensembl"/>
</dbReference>
<dbReference type="GO" id="GO:0062023">
    <property type="term" value="C:collagen-containing extracellular matrix"/>
    <property type="evidence" value="ECO:0000318"/>
    <property type="project" value="GO_Central"/>
</dbReference>
<dbReference type="GO" id="GO:0005576">
    <property type="term" value="C:extracellular region"/>
    <property type="evidence" value="ECO:0000304"/>
    <property type="project" value="Reactome"/>
</dbReference>
<dbReference type="GO" id="GO:0005615">
    <property type="term" value="C:extracellular space"/>
    <property type="evidence" value="ECO:0000314"/>
    <property type="project" value="UniProtKB"/>
</dbReference>
<dbReference type="GO" id="GO:0046872">
    <property type="term" value="F:metal ion binding"/>
    <property type="evidence" value="ECO:0007669"/>
    <property type="project" value="UniProtKB-KW"/>
</dbReference>
<dbReference type="GO" id="GO:0048018">
    <property type="term" value="F:receptor ligand activity"/>
    <property type="evidence" value="ECO:0000314"/>
    <property type="project" value="UniProt"/>
</dbReference>
<dbReference type="GO" id="GO:0030971">
    <property type="term" value="F:receptor tyrosine kinase binding"/>
    <property type="evidence" value="ECO:0000353"/>
    <property type="project" value="UniProtKB"/>
</dbReference>
<dbReference type="GO" id="GO:0005102">
    <property type="term" value="F:signaling receptor binding"/>
    <property type="evidence" value="ECO:0000304"/>
    <property type="project" value="ProtInc"/>
</dbReference>
<dbReference type="GO" id="GO:0001525">
    <property type="term" value="P:angiogenesis"/>
    <property type="evidence" value="ECO:0000318"/>
    <property type="project" value="GO_Central"/>
</dbReference>
<dbReference type="GO" id="GO:0031100">
    <property type="term" value="P:animal organ regeneration"/>
    <property type="evidence" value="ECO:0007669"/>
    <property type="project" value="Ensembl"/>
</dbReference>
<dbReference type="GO" id="GO:0007596">
    <property type="term" value="P:blood coagulation"/>
    <property type="evidence" value="ECO:0007669"/>
    <property type="project" value="InterPro"/>
</dbReference>
<dbReference type="GO" id="GO:0071363">
    <property type="term" value="P:cellular response to growth factor stimulus"/>
    <property type="evidence" value="ECO:0007669"/>
    <property type="project" value="Ensembl"/>
</dbReference>
<dbReference type="GO" id="GO:0010467">
    <property type="term" value="P:gene expression"/>
    <property type="evidence" value="ECO:0000314"/>
    <property type="project" value="MGI"/>
</dbReference>
<dbReference type="GO" id="GO:0007281">
    <property type="term" value="P:germ cell development"/>
    <property type="evidence" value="ECO:0007669"/>
    <property type="project" value="Ensembl"/>
</dbReference>
<dbReference type="GO" id="GO:0072012">
    <property type="term" value="P:glomerulus vasculature development"/>
    <property type="evidence" value="ECO:0000250"/>
    <property type="project" value="UniProtKB"/>
</dbReference>
<dbReference type="GO" id="GO:0060135">
    <property type="term" value="P:maternal process involved in female pregnancy"/>
    <property type="evidence" value="ECO:0007669"/>
    <property type="project" value="Ensembl"/>
</dbReference>
<dbReference type="GO" id="GO:0016525">
    <property type="term" value="P:negative regulation of angiogenesis"/>
    <property type="evidence" value="ECO:0007669"/>
    <property type="project" value="Ensembl"/>
</dbReference>
<dbReference type="GO" id="GO:0043537">
    <property type="term" value="P:negative regulation of blood vessel endothelial cell migration"/>
    <property type="evidence" value="ECO:0000314"/>
    <property type="project" value="UniProtKB"/>
</dbReference>
<dbReference type="GO" id="GO:0010812">
    <property type="term" value="P:negative regulation of cell-substrate adhesion"/>
    <property type="evidence" value="ECO:0007669"/>
    <property type="project" value="Ensembl"/>
</dbReference>
<dbReference type="GO" id="GO:0050928">
    <property type="term" value="P:negative regulation of positive chemotaxis"/>
    <property type="evidence" value="ECO:0000314"/>
    <property type="project" value="UniProtKB"/>
</dbReference>
<dbReference type="GO" id="GO:0045766">
    <property type="term" value="P:positive regulation of angiogenesis"/>
    <property type="evidence" value="ECO:0007669"/>
    <property type="project" value="Ensembl"/>
</dbReference>
<dbReference type="GO" id="GO:0050820">
    <property type="term" value="P:positive regulation of coagulation"/>
    <property type="evidence" value="ECO:0000314"/>
    <property type="project" value="UniProt"/>
</dbReference>
<dbReference type="GO" id="GO:0014823">
    <property type="term" value="P:response to activity"/>
    <property type="evidence" value="ECO:0007669"/>
    <property type="project" value="Ensembl"/>
</dbReference>
<dbReference type="GO" id="GO:0009749">
    <property type="term" value="P:response to glucose"/>
    <property type="evidence" value="ECO:0007669"/>
    <property type="project" value="Ensembl"/>
</dbReference>
<dbReference type="GO" id="GO:0001666">
    <property type="term" value="P:response to hypoxia"/>
    <property type="evidence" value="ECO:0007669"/>
    <property type="project" value="Ensembl"/>
</dbReference>
<dbReference type="GO" id="GO:0009612">
    <property type="term" value="P:response to mechanical stimulus"/>
    <property type="evidence" value="ECO:0007669"/>
    <property type="project" value="Ensembl"/>
</dbReference>
<dbReference type="GO" id="GO:0007165">
    <property type="term" value="P:signal transduction"/>
    <property type="evidence" value="ECO:0000304"/>
    <property type="project" value="ProtInc"/>
</dbReference>
<dbReference type="GO" id="GO:0048014">
    <property type="term" value="P:Tie signaling pathway"/>
    <property type="evidence" value="ECO:0000314"/>
    <property type="project" value="UniProtKB"/>
</dbReference>
<dbReference type="CDD" id="cd00087">
    <property type="entry name" value="FReD"/>
    <property type="match status" value="1"/>
</dbReference>
<dbReference type="FunFam" id="4.10.530.10:FF:000001">
    <property type="entry name" value="angiopoietin-2 isoform X1"/>
    <property type="match status" value="1"/>
</dbReference>
<dbReference type="FunFam" id="3.90.215.10:FF:000001">
    <property type="entry name" value="Tenascin isoform 1"/>
    <property type="match status" value="1"/>
</dbReference>
<dbReference type="Gene3D" id="3.90.215.10">
    <property type="entry name" value="Gamma Fibrinogen, chain A, domain 1"/>
    <property type="match status" value="1"/>
</dbReference>
<dbReference type="Gene3D" id="4.10.530.10">
    <property type="entry name" value="Gamma-fibrinogen Carboxyl Terminal Fragment, domain 2"/>
    <property type="match status" value="1"/>
</dbReference>
<dbReference type="InterPro" id="IPR037579">
    <property type="entry name" value="FIB_ANG-like"/>
</dbReference>
<dbReference type="InterPro" id="IPR036056">
    <property type="entry name" value="Fibrinogen-like_C"/>
</dbReference>
<dbReference type="InterPro" id="IPR014716">
    <property type="entry name" value="Fibrinogen_a/b/g_C_1"/>
</dbReference>
<dbReference type="InterPro" id="IPR002181">
    <property type="entry name" value="Fibrinogen_a/b/g_C_dom"/>
</dbReference>
<dbReference type="InterPro" id="IPR020837">
    <property type="entry name" value="Fibrinogen_CS"/>
</dbReference>
<dbReference type="NCBIfam" id="NF040941">
    <property type="entry name" value="GGGWT_bact"/>
    <property type="match status" value="1"/>
</dbReference>
<dbReference type="PANTHER" id="PTHR47221">
    <property type="entry name" value="FIBRINOGEN ALPHA CHAIN"/>
    <property type="match status" value="1"/>
</dbReference>
<dbReference type="PANTHER" id="PTHR47221:SF6">
    <property type="entry name" value="FIBRINOGEN ALPHA CHAIN"/>
    <property type="match status" value="1"/>
</dbReference>
<dbReference type="Pfam" id="PF25443">
    <property type="entry name" value="ANG-1"/>
    <property type="match status" value="1"/>
</dbReference>
<dbReference type="Pfam" id="PF00147">
    <property type="entry name" value="Fibrinogen_C"/>
    <property type="match status" value="1"/>
</dbReference>
<dbReference type="SMART" id="SM00186">
    <property type="entry name" value="FBG"/>
    <property type="match status" value="1"/>
</dbReference>
<dbReference type="SUPFAM" id="SSF56496">
    <property type="entry name" value="Fibrinogen C-terminal domain-like"/>
    <property type="match status" value="1"/>
</dbReference>
<dbReference type="PROSITE" id="PS00514">
    <property type="entry name" value="FIBRINOGEN_C_1"/>
    <property type="match status" value="1"/>
</dbReference>
<dbReference type="PROSITE" id="PS51406">
    <property type="entry name" value="FIBRINOGEN_C_2"/>
    <property type="match status" value="1"/>
</dbReference>
<feature type="signal peptide" evidence="2">
    <location>
        <begin position="1"/>
        <end position="18"/>
    </location>
</feature>
<feature type="chain" id="PRO_0000009113" description="Angiopoietin-2">
    <location>
        <begin position="19"/>
        <end position="496"/>
    </location>
</feature>
<feature type="domain" description="Fibrinogen C-terminal" evidence="3">
    <location>
        <begin position="275"/>
        <end position="495"/>
    </location>
</feature>
<feature type="coiled-coil region" evidence="2">
    <location>
        <begin position="166"/>
        <end position="248"/>
    </location>
</feature>
<feature type="binding site" evidence="6 7 15">
    <location>
        <position position="429"/>
    </location>
    <ligand>
        <name>Ca(2+)</name>
        <dbReference type="ChEBI" id="CHEBI:29108"/>
    </ligand>
</feature>
<feature type="binding site" evidence="6 7 15">
    <location>
        <position position="431"/>
    </location>
    <ligand>
        <name>Ca(2+)</name>
        <dbReference type="ChEBI" id="CHEBI:29108"/>
    </ligand>
</feature>
<feature type="binding site" evidence="6 7 15">
    <location>
        <position position="433"/>
    </location>
    <ligand>
        <name>Ca(2+)</name>
        <dbReference type="ChEBI" id="CHEBI:29108"/>
    </ligand>
</feature>
<feature type="binding site" evidence="6 7 15">
    <location>
        <position position="435"/>
    </location>
    <ligand>
        <name>Ca(2+)</name>
        <dbReference type="ChEBI" id="CHEBI:29108"/>
    </ligand>
</feature>
<feature type="glycosylation site" description="N-linked (GlcNAc...) asparagine" evidence="2">
    <location>
        <position position="89"/>
    </location>
</feature>
<feature type="glycosylation site" description="N-linked (GlcNAc...) asparagine" evidence="2">
    <location>
        <position position="119"/>
    </location>
</feature>
<feature type="glycosylation site" description="N-linked (GlcNAc...) asparagine" evidence="2">
    <location>
        <position position="133"/>
    </location>
</feature>
<feature type="glycosylation site" description="N-linked (GlcNAc...) asparagine" evidence="2">
    <location>
        <position position="151"/>
    </location>
</feature>
<feature type="glycosylation site" description="N-linked (GlcNAc...) asparagine" evidence="2">
    <location>
        <position position="240"/>
    </location>
</feature>
<feature type="glycosylation site" description="N-linked (GlcNAc...) asparagine" evidence="2">
    <location>
        <position position="304"/>
    </location>
</feature>
<feature type="disulfide bond" evidence="6 7 15">
    <location>
        <begin position="284"/>
        <end position="313"/>
    </location>
</feature>
<feature type="disulfide bond" evidence="6 7 15">
    <location>
        <begin position="433"/>
        <end position="435"/>
    </location>
</feature>
<feature type="disulfide bond" evidence="6 7 15">
    <location>
        <begin position="437"/>
        <end position="450"/>
    </location>
</feature>
<feature type="splice variant" id="VSP_001540" description="In isoform 3." evidence="12">
    <location>
        <begin position="97"/>
        <end position="148"/>
    </location>
</feature>
<feature type="splice variant" id="VSP_040096" description="In isoform 2." evidence="13 14">
    <location>
        <position position="268"/>
    </location>
</feature>
<feature type="sequence variant" id="VAR_085861" description="In LMPHM10; uncertain significance; results in increased lymphangiogenesis; decreased interaction with ITGA5; no effect on protein abundance; no effect on secretion; no effect on interaction with TEK; dbSNP:rs61733318." evidence="10">
    <original>T</original>
    <variation>M</variation>
    <location>
        <position position="299"/>
    </location>
</feature>
<feature type="sequence variant" id="VAR_085862" description="In LMPHM10; uncertain significance; no effect on protein abundance; reduced secretion; reduced glycosylation; no effect on interaction with TEK; dbSNP:rs767462360." evidence="10">
    <original>N</original>
    <variation>K</variation>
    <location>
        <position position="304"/>
    </location>
</feature>
<feature type="sequence variant" id="VAR_049069" description="In dbSNP:rs7813215.">
    <original>V</original>
    <variation>I</variation>
    <location>
        <position position="333"/>
    </location>
</feature>
<feature type="sequence variant" id="VAR_085863" description="In LMPHM10; no effect on protein abundance; mutant protein is not secreted; loss of interaction with TEK; dbSNP:rs2129565840." evidence="10">
    <original>C</original>
    <variation>S</variation>
    <location>
        <position position="435"/>
    </location>
</feature>
<feature type="sequence variant" id="VAR_085864" description="In LMPHM10; uncertain significance; no effect on protein abundance; severely decreased secretion." evidence="10">
    <original>R</original>
    <variation>Q</variation>
    <location>
        <position position="492"/>
    </location>
</feature>
<feature type="strand" evidence="17">
    <location>
        <begin position="281"/>
        <end position="283"/>
    </location>
</feature>
<feature type="helix" evidence="17">
    <location>
        <begin position="284"/>
        <end position="289"/>
    </location>
</feature>
<feature type="strand" evidence="17">
    <location>
        <begin position="296"/>
        <end position="301"/>
    </location>
</feature>
<feature type="strand" evidence="17">
    <location>
        <begin position="308"/>
        <end position="314"/>
    </location>
</feature>
<feature type="helix" evidence="18">
    <location>
        <begin position="317"/>
        <end position="319"/>
    </location>
</feature>
<feature type="strand" evidence="17">
    <location>
        <begin position="322"/>
        <end position="331"/>
    </location>
</feature>
<feature type="helix" evidence="17">
    <location>
        <begin position="339"/>
        <end position="344"/>
    </location>
</feature>
<feature type="strand" evidence="17">
    <location>
        <begin position="351"/>
        <end position="354"/>
    </location>
</feature>
<feature type="helix" evidence="17">
    <location>
        <begin position="357"/>
        <end position="364"/>
    </location>
</feature>
<feature type="strand" evidence="17">
    <location>
        <begin position="369"/>
        <end position="376"/>
    </location>
</feature>
<feature type="strand" evidence="16">
    <location>
        <begin position="378"/>
        <end position="380"/>
    </location>
</feature>
<feature type="strand" evidence="17">
    <location>
        <begin position="382"/>
        <end position="392"/>
    </location>
</feature>
<feature type="helix" evidence="17">
    <location>
        <begin position="395"/>
        <end position="397"/>
    </location>
</feature>
<feature type="strand" evidence="17">
    <location>
        <begin position="401"/>
        <end position="410"/>
    </location>
</feature>
<feature type="strand" evidence="17">
    <location>
        <begin position="431"/>
        <end position="435"/>
    </location>
</feature>
<feature type="helix" evidence="17">
    <location>
        <begin position="437"/>
        <end position="441"/>
    </location>
</feature>
<feature type="strand" evidence="17">
    <location>
        <begin position="448"/>
        <end position="450"/>
    </location>
</feature>
<feature type="strand" evidence="17">
    <location>
        <begin position="452"/>
        <end position="454"/>
    </location>
</feature>
<feature type="turn" evidence="19">
    <location>
        <begin position="462"/>
        <end position="464"/>
    </location>
</feature>
<feature type="strand" evidence="18">
    <location>
        <begin position="471"/>
        <end position="474"/>
    </location>
</feature>
<feature type="helix" evidence="17">
    <location>
        <begin position="475"/>
        <end position="478"/>
    </location>
</feature>
<feature type="strand" evidence="17">
    <location>
        <begin position="485"/>
        <end position="493"/>
    </location>
</feature>
<name>ANGP2_HUMAN</name>
<comment type="function">
    <text evidence="5 8 9 10 11">Binds to TEK/TIE2, competing for the ANGPT1 binding site, and modulating ANGPT1 signaling (PubMed:15284220, PubMed:19116766, PubMed:19223473, PubMed:9204896). Can induce tyrosine phosphorylation of TEK/TIE2 in the absence of ANGPT1 (PubMed:15284220, PubMed:19116766, PubMed:19223473, PubMed:9204896). In the absence of angiogenic inducers, such as VEGF, ANGPT2-mediated loosening of cell-matrix contacts may induce endothelial cell apoptosis with consequent vascular regression. In concert with VEGF, it may facilitate endothelial cell migration and proliferation, thus serving as a permissive angiogenic signal (PubMed:15284220, PubMed:19116766, PubMed:19223473, PubMed:9204896). Involved in the regulation of lymphangiogenesis (PubMed:32908006).</text>
</comment>
<comment type="subunit">
    <text evidence="1 4 5 7 9 10 11">Interacts with TEK/TIE2, competing for the same binding site as ANGPT1 (PubMed:12427764, PubMed:15284220, PubMed:19223473, PubMed:32908006, PubMed:9204896). Interacts with ITGA5 (PubMed:32908006). Interacts with SVEP1/polydom (By similarity). Interacts with THBD; this interaction significantly inhibits the generation of activated PC and TAFIa/CPB2 by the thrombin/thrombomodulin complex (PubMed:29323190).</text>
</comment>
<comment type="interaction">
    <interactant intactId="EBI-2912111">
        <id>O15123</id>
    </interactant>
    <interactant intactId="EBI-2257090">
        <id>Q02763</id>
        <label>TEK</label>
    </interactant>
    <organismsDiffer>false</organismsDiffer>
    <experiments>4</experiments>
</comment>
<comment type="interaction">
    <interactant intactId="EBI-15552475">
        <id>O15123-1</id>
    </interactant>
    <interactant intactId="EBI-2257090">
        <id>Q02763</id>
        <label>TEK</label>
    </interactant>
    <organismsDiffer>false</organismsDiffer>
    <experiments>5</experiments>
</comment>
<comment type="subcellular location">
    <subcellularLocation>
        <location evidence="10">Secreted</location>
    </subcellularLocation>
</comment>
<comment type="alternative products">
    <event type="alternative splicing"/>
    <isoform>
        <id>O15123-1</id>
        <name>1</name>
        <sequence type="displayed"/>
    </isoform>
    <isoform>
        <id>O15123-2</id>
        <name>3</name>
        <sequence type="described" ref="VSP_001540"/>
    </isoform>
    <isoform>
        <id>O15123-3</id>
        <name>2</name>
        <sequence type="described" ref="VSP_040096"/>
    </isoform>
</comment>
<comment type="domain">
    <text>The Fibrinogen C-terminal domain mediates interaction with the TEK/TIE2 receptor.</text>
</comment>
<comment type="disease" evidence="10">
    <disease id="DI-06134">
        <name>Lymphatic malformation 10</name>
        <acronym>LMPHM10</acronym>
        <description>A form of primary lymphedema, a disease characterized by swelling of body parts due to developmental anomalies and functional defects of the lymphatic system. Patients with lymphedema may suffer from recurrent local infections. LMPHM10 is an autosomal dominant form characterized by the onset of swelling in the lower extremities within the first year of life. Lymphedema may also occur in the neck, upper extremities, and scrotum or labia majora. Gradual resorption generally occurs, although some patients may experience progression complicated by cellulitis. Incomplete penetrance has been observed in some families.</description>
        <dbReference type="MIM" id="619369"/>
    </disease>
    <text>The disease is caused by variants affecting the gene represented in this entry.</text>
</comment>
<comment type="online information" name="Wikipedia">
    <link uri="https://en.wikipedia.org/wiki/Angiopoietin"/>
    <text>Angiopoietin entry</text>
</comment>
<organism>
    <name type="scientific">Homo sapiens</name>
    <name type="common">Human</name>
    <dbReference type="NCBI Taxonomy" id="9606"/>
    <lineage>
        <taxon>Eukaryota</taxon>
        <taxon>Metazoa</taxon>
        <taxon>Chordata</taxon>
        <taxon>Craniata</taxon>
        <taxon>Vertebrata</taxon>
        <taxon>Euteleostomi</taxon>
        <taxon>Mammalia</taxon>
        <taxon>Eutheria</taxon>
        <taxon>Euarchontoglires</taxon>
        <taxon>Primates</taxon>
        <taxon>Haplorrhini</taxon>
        <taxon>Catarrhini</taxon>
        <taxon>Hominidae</taxon>
        <taxon>Homo</taxon>
    </lineage>
</organism>